<dbReference type="EMBL" id="AM286690">
    <property type="protein sequence ID" value="CAL15846.1"/>
    <property type="molecule type" value="Genomic_DNA"/>
</dbReference>
<dbReference type="RefSeq" id="WP_011587691.1">
    <property type="nucleotide sequence ID" value="NC_008260.1"/>
</dbReference>
<dbReference type="SMR" id="Q0VSK2"/>
<dbReference type="STRING" id="393595.ABO_0398"/>
<dbReference type="KEGG" id="abo:ABO_0398"/>
<dbReference type="eggNOG" id="COG0088">
    <property type="taxonomic scope" value="Bacteria"/>
</dbReference>
<dbReference type="HOGENOM" id="CLU_041575_5_2_6"/>
<dbReference type="OrthoDB" id="9803201at2"/>
<dbReference type="Proteomes" id="UP000008871">
    <property type="component" value="Chromosome"/>
</dbReference>
<dbReference type="GO" id="GO:1990904">
    <property type="term" value="C:ribonucleoprotein complex"/>
    <property type="evidence" value="ECO:0007669"/>
    <property type="project" value="UniProtKB-KW"/>
</dbReference>
<dbReference type="GO" id="GO:0005840">
    <property type="term" value="C:ribosome"/>
    <property type="evidence" value="ECO:0007669"/>
    <property type="project" value="UniProtKB-KW"/>
</dbReference>
<dbReference type="GO" id="GO:0019843">
    <property type="term" value="F:rRNA binding"/>
    <property type="evidence" value="ECO:0007669"/>
    <property type="project" value="UniProtKB-UniRule"/>
</dbReference>
<dbReference type="GO" id="GO:0003735">
    <property type="term" value="F:structural constituent of ribosome"/>
    <property type="evidence" value="ECO:0007669"/>
    <property type="project" value="InterPro"/>
</dbReference>
<dbReference type="GO" id="GO:0006412">
    <property type="term" value="P:translation"/>
    <property type="evidence" value="ECO:0007669"/>
    <property type="project" value="UniProtKB-UniRule"/>
</dbReference>
<dbReference type="FunFam" id="3.40.1370.10:FF:000001">
    <property type="entry name" value="50S ribosomal protein L4"/>
    <property type="match status" value="1"/>
</dbReference>
<dbReference type="Gene3D" id="3.40.1370.10">
    <property type="match status" value="1"/>
</dbReference>
<dbReference type="HAMAP" id="MF_01328_B">
    <property type="entry name" value="Ribosomal_uL4_B"/>
    <property type="match status" value="1"/>
</dbReference>
<dbReference type="InterPro" id="IPR002136">
    <property type="entry name" value="Ribosomal_uL4"/>
</dbReference>
<dbReference type="InterPro" id="IPR013005">
    <property type="entry name" value="Ribosomal_uL4-like"/>
</dbReference>
<dbReference type="InterPro" id="IPR023574">
    <property type="entry name" value="Ribosomal_uL4_dom_sf"/>
</dbReference>
<dbReference type="NCBIfam" id="TIGR03953">
    <property type="entry name" value="rplD_bact"/>
    <property type="match status" value="1"/>
</dbReference>
<dbReference type="PANTHER" id="PTHR10746">
    <property type="entry name" value="50S RIBOSOMAL PROTEIN L4"/>
    <property type="match status" value="1"/>
</dbReference>
<dbReference type="PANTHER" id="PTHR10746:SF6">
    <property type="entry name" value="LARGE RIBOSOMAL SUBUNIT PROTEIN UL4M"/>
    <property type="match status" value="1"/>
</dbReference>
<dbReference type="Pfam" id="PF00573">
    <property type="entry name" value="Ribosomal_L4"/>
    <property type="match status" value="1"/>
</dbReference>
<dbReference type="SUPFAM" id="SSF52166">
    <property type="entry name" value="Ribosomal protein L4"/>
    <property type="match status" value="1"/>
</dbReference>
<comment type="function">
    <text evidence="1">One of the primary rRNA binding proteins, this protein initially binds near the 5'-end of the 23S rRNA. It is important during the early stages of 50S assembly. It makes multiple contacts with different domains of the 23S rRNA in the assembled 50S subunit and ribosome.</text>
</comment>
<comment type="function">
    <text evidence="1">Forms part of the polypeptide exit tunnel.</text>
</comment>
<comment type="subunit">
    <text evidence="1">Part of the 50S ribosomal subunit.</text>
</comment>
<comment type="similarity">
    <text evidence="1">Belongs to the universal ribosomal protein uL4 family.</text>
</comment>
<name>RL4_ALCBS</name>
<proteinExistence type="inferred from homology"/>
<organism>
    <name type="scientific">Alcanivorax borkumensis (strain ATCC 700651 / DSM 11573 / NCIMB 13689 / SK2)</name>
    <dbReference type="NCBI Taxonomy" id="393595"/>
    <lineage>
        <taxon>Bacteria</taxon>
        <taxon>Pseudomonadati</taxon>
        <taxon>Pseudomonadota</taxon>
        <taxon>Gammaproteobacteria</taxon>
        <taxon>Oceanospirillales</taxon>
        <taxon>Alcanivoracaceae</taxon>
        <taxon>Alcanivorax</taxon>
    </lineage>
</organism>
<keyword id="KW-1185">Reference proteome</keyword>
<keyword id="KW-0687">Ribonucleoprotein</keyword>
<keyword id="KW-0689">Ribosomal protein</keyword>
<keyword id="KW-0694">RNA-binding</keyword>
<keyword id="KW-0699">rRNA-binding</keyword>
<sequence length="200" mass="21702">MNLNTASGGTVTVSEVAFGKDFNEPLVHQVVTAFLAGARQGSKAQKNRSDVSGGGRKPWRQKGTGRARAGTIRSPIWRGGGKTFAAVPRDHSQKVNRKMYRGALQCIMSELVRQERLVVVDEFTVDSPKTKAVAAKLKGMELTSVLIVTDNVDENLFMASRNLPKVDVRDSQGVDPVSLIAFEKVLITVPALKKLEEALA</sequence>
<reference key="1">
    <citation type="journal article" date="2006" name="Nat. Biotechnol.">
        <title>Genome sequence of the ubiquitous hydrocarbon-degrading marine bacterium Alcanivorax borkumensis.</title>
        <authorList>
            <person name="Schneiker S."/>
            <person name="Martins dos Santos V.A.P."/>
            <person name="Bartels D."/>
            <person name="Bekel T."/>
            <person name="Brecht M."/>
            <person name="Buhrmester J."/>
            <person name="Chernikova T.N."/>
            <person name="Denaro R."/>
            <person name="Ferrer M."/>
            <person name="Gertler C."/>
            <person name="Goesmann A."/>
            <person name="Golyshina O.V."/>
            <person name="Kaminski F."/>
            <person name="Khachane A.N."/>
            <person name="Lang S."/>
            <person name="Linke B."/>
            <person name="McHardy A.C."/>
            <person name="Meyer F."/>
            <person name="Nechitaylo T."/>
            <person name="Puehler A."/>
            <person name="Regenhardt D."/>
            <person name="Rupp O."/>
            <person name="Sabirova J.S."/>
            <person name="Selbitschka W."/>
            <person name="Yakimov M.M."/>
            <person name="Timmis K.N."/>
            <person name="Vorhoelter F.-J."/>
            <person name="Weidner S."/>
            <person name="Kaiser O."/>
            <person name="Golyshin P.N."/>
        </authorList>
    </citation>
    <scope>NUCLEOTIDE SEQUENCE [LARGE SCALE GENOMIC DNA]</scope>
    <source>
        <strain>ATCC 700651 / DSM 11573 / NCIMB 13689 / SK2</strain>
    </source>
</reference>
<accession>Q0VSK2</accession>
<gene>
    <name evidence="1" type="primary">rplD</name>
    <name type="ordered locus">ABO_0398</name>
</gene>
<protein>
    <recommendedName>
        <fullName evidence="1">Large ribosomal subunit protein uL4</fullName>
    </recommendedName>
    <alternativeName>
        <fullName evidence="3">50S ribosomal protein L4</fullName>
    </alternativeName>
</protein>
<feature type="chain" id="PRO_1000086506" description="Large ribosomal subunit protein uL4">
    <location>
        <begin position="1"/>
        <end position="200"/>
    </location>
</feature>
<feature type="region of interest" description="Disordered" evidence="2">
    <location>
        <begin position="42"/>
        <end position="69"/>
    </location>
</feature>
<evidence type="ECO:0000255" key="1">
    <source>
        <dbReference type="HAMAP-Rule" id="MF_01328"/>
    </source>
</evidence>
<evidence type="ECO:0000256" key="2">
    <source>
        <dbReference type="SAM" id="MobiDB-lite"/>
    </source>
</evidence>
<evidence type="ECO:0000305" key="3"/>